<proteinExistence type="inferred from homology"/>
<evidence type="ECO:0000255" key="1">
    <source>
        <dbReference type="HAMAP-Rule" id="MF_00127"/>
    </source>
</evidence>
<organism>
    <name type="scientific">Mycoplasma capricolum subsp. capricolum (strain California kid / ATCC 27343 / NCTC 10154)</name>
    <dbReference type="NCBI Taxonomy" id="340047"/>
    <lineage>
        <taxon>Bacteria</taxon>
        <taxon>Bacillati</taxon>
        <taxon>Mycoplasmatota</taxon>
        <taxon>Mollicutes</taxon>
        <taxon>Mycoplasmataceae</taxon>
        <taxon>Mycoplasma</taxon>
    </lineage>
</organism>
<comment type="catalytic activity">
    <reaction evidence="1">
        <text>tRNA(His) + L-histidine + ATP = L-histidyl-tRNA(His) + AMP + diphosphate + H(+)</text>
        <dbReference type="Rhea" id="RHEA:17313"/>
        <dbReference type="Rhea" id="RHEA-COMP:9665"/>
        <dbReference type="Rhea" id="RHEA-COMP:9689"/>
        <dbReference type="ChEBI" id="CHEBI:15378"/>
        <dbReference type="ChEBI" id="CHEBI:30616"/>
        <dbReference type="ChEBI" id="CHEBI:33019"/>
        <dbReference type="ChEBI" id="CHEBI:57595"/>
        <dbReference type="ChEBI" id="CHEBI:78442"/>
        <dbReference type="ChEBI" id="CHEBI:78527"/>
        <dbReference type="ChEBI" id="CHEBI:456215"/>
        <dbReference type="EC" id="6.1.1.21"/>
    </reaction>
</comment>
<comment type="subunit">
    <text evidence="1">Homodimer.</text>
</comment>
<comment type="subcellular location">
    <subcellularLocation>
        <location evidence="1">Cytoplasm</location>
    </subcellularLocation>
</comment>
<comment type="similarity">
    <text evidence="1">Belongs to the class-II aminoacyl-tRNA synthetase family.</text>
</comment>
<feature type="chain" id="PRO_1000016397" description="Histidine--tRNA ligase">
    <location>
        <begin position="1"/>
        <end position="414"/>
    </location>
</feature>
<dbReference type="EC" id="6.1.1.21" evidence="1"/>
<dbReference type="EMBL" id="CP000123">
    <property type="protein sequence ID" value="ABC01130.1"/>
    <property type="molecule type" value="Genomic_DNA"/>
</dbReference>
<dbReference type="RefSeq" id="WP_011387210.1">
    <property type="nucleotide sequence ID" value="NC_007633.1"/>
</dbReference>
<dbReference type="SMR" id="Q2SSF4"/>
<dbReference type="GeneID" id="23778720"/>
<dbReference type="KEGG" id="mcp:MCAP_0324"/>
<dbReference type="HOGENOM" id="CLU_025113_1_1_14"/>
<dbReference type="PhylomeDB" id="Q2SSF4"/>
<dbReference type="Proteomes" id="UP000001928">
    <property type="component" value="Chromosome"/>
</dbReference>
<dbReference type="GO" id="GO:0005737">
    <property type="term" value="C:cytoplasm"/>
    <property type="evidence" value="ECO:0007669"/>
    <property type="project" value="UniProtKB-SubCell"/>
</dbReference>
<dbReference type="GO" id="GO:0005524">
    <property type="term" value="F:ATP binding"/>
    <property type="evidence" value="ECO:0007669"/>
    <property type="project" value="UniProtKB-UniRule"/>
</dbReference>
<dbReference type="GO" id="GO:0004821">
    <property type="term" value="F:histidine-tRNA ligase activity"/>
    <property type="evidence" value="ECO:0007669"/>
    <property type="project" value="UniProtKB-UniRule"/>
</dbReference>
<dbReference type="GO" id="GO:0006427">
    <property type="term" value="P:histidyl-tRNA aminoacylation"/>
    <property type="evidence" value="ECO:0007669"/>
    <property type="project" value="UniProtKB-UniRule"/>
</dbReference>
<dbReference type="CDD" id="cd00773">
    <property type="entry name" value="HisRS-like_core"/>
    <property type="match status" value="1"/>
</dbReference>
<dbReference type="Gene3D" id="3.40.50.800">
    <property type="entry name" value="Anticodon-binding domain"/>
    <property type="match status" value="1"/>
</dbReference>
<dbReference type="Gene3D" id="3.30.930.10">
    <property type="entry name" value="Bira Bifunctional Protein, Domain 2"/>
    <property type="match status" value="1"/>
</dbReference>
<dbReference type="HAMAP" id="MF_00127">
    <property type="entry name" value="His_tRNA_synth"/>
    <property type="match status" value="1"/>
</dbReference>
<dbReference type="InterPro" id="IPR006195">
    <property type="entry name" value="aa-tRNA-synth_II"/>
</dbReference>
<dbReference type="InterPro" id="IPR045864">
    <property type="entry name" value="aa-tRNA-synth_II/BPL/LPL"/>
</dbReference>
<dbReference type="InterPro" id="IPR036621">
    <property type="entry name" value="Anticodon-bd_dom_sf"/>
</dbReference>
<dbReference type="InterPro" id="IPR015807">
    <property type="entry name" value="His-tRNA-ligase"/>
</dbReference>
<dbReference type="InterPro" id="IPR041715">
    <property type="entry name" value="HisRS-like_core"/>
</dbReference>
<dbReference type="InterPro" id="IPR004516">
    <property type="entry name" value="HisRS/HisZ"/>
</dbReference>
<dbReference type="NCBIfam" id="TIGR00442">
    <property type="entry name" value="hisS"/>
    <property type="match status" value="1"/>
</dbReference>
<dbReference type="PANTHER" id="PTHR43707:SF1">
    <property type="entry name" value="HISTIDINE--TRNA LIGASE, MITOCHONDRIAL-RELATED"/>
    <property type="match status" value="1"/>
</dbReference>
<dbReference type="PANTHER" id="PTHR43707">
    <property type="entry name" value="HISTIDYL-TRNA SYNTHETASE"/>
    <property type="match status" value="1"/>
</dbReference>
<dbReference type="Pfam" id="PF13393">
    <property type="entry name" value="tRNA-synt_His"/>
    <property type="match status" value="2"/>
</dbReference>
<dbReference type="PIRSF" id="PIRSF001549">
    <property type="entry name" value="His-tRNA_synth"/>
    <property type="match status" value="1"/>
</dbReference>
<dbReference type="SUPFAM" id="SSF52954">
    <property type="entry name" value="Class II aaRS ABD-related"/>
    <property type="match status" value="1"/>
</dbReference>
<dbReference type="SUPFAM" id="SSF55681">
    <property type="entry name" value="Class II aaRS and biotin synthetases"/>
    <property type="match status" value="1"/>
</dbReference>
<dbReference type="PROSITE" id="PS50862">
    <property type="entry name" value="AA_TRNA_LIGASE_II"/>
    <property type="match status" value="1"/>
</dbReference>
<accession>Q2SSF4</accession>
<gene>
    <name evidence="1" type="primary">hisS</name>
    <name type="ordered locus">MCAP_0324</name>
</gene>
<sequence>MLQKPRGTQDFFLDETKLWIKVETKLREILNKFNYSEIRTPMFESKELFIRSIGSTSDIVSKEMYEFVDKKNRSLVLKPEGTASVVRAVVENKLYAEDYLPFKTYYISPMFRYERPQNGRYRQFHQLGIEVYGSDSIQQDYEVLNIANNIINDFKLNKNIKIYTNYLITGKNREQYILELKKYLTDFKLCNDCNIRIEKNPLRVLDCKIDDKQFNNVPSMKDFLTDEEQKRYQQTLDLFKEMNISTIHDDKLVRGLDYYTGFIFEIKYEAKNIEQTIIAGGRYNNLVYEIGNINLPACGFGMGLERFINIIKEQNNKLNKNDQSIDLYTICLDQSAIKLNQQILELSRSIGLISDSNYYNMSLKSALKKSDKLNPKYLIILGEKEATSNQFIIKNKINKTEIKTTLTNFVNDLK</sequence>
<reference key="1">
    <citation type="submission" date="2005-09" db="EMBL/GenBank/DDBJ databases">
        <authorList>
            <person name="Glass J.I."/>
            <person name="Lartigue C."/>
            <person name="Pfannkoch C."/>
            <person name="Baden-Tillson H."/>
            <person name="Smith H.O."/>
            <person name="Venter J.C."/>
            <person name="Roske K."/>
            <person name="Wise K.S."/>
            <person name="Calcutt M.J."/>
            <person name="Nelson W.C."/>
            <person name="Nierman W.C."/>
        </authorList>
    </citation>
    <scope>NUCLEOTIDE SEQUENCE [LARGE SCALE GENOMIC DNA]</scope>
    <source>
        <strain>California kid / ATCC 27343 / NCTC 10154</strain>
    </source>
</reference>
<protein>
    <recommendedName>
        <fullName evidence="1">Histidine--tRNA ligase</fullName>
        <ecNumber evidence="1">6.1.1.21</ecNumber>
    </recommendedName>
    <alternativeName>
        <fullName evidence="1">Histidyl-tRNA synthetase</fullName>
        <shortName evidence="1">HisRS</shortName>
    </alternativeName>
</protein>
<keyword id="KW-0030">Aminoacyl-tRNA synthetase</keyword>
<keyword id="KW-0067">ATP-binding</keyword>
<keyword id="KW-0963">Cytoplasm</keyword>
<keyword id="KW-0436">Ligase</keyword>
<keyword id="KW-0547">Nucleotide-binding</keyword>
<keyword id="KW-0648">Protein biosynthesis</keyword>
<name>SYH_MYCCT</name>